<reference key="1">
    <citation type="journal article" date="1993" name="Virus Res.">
        <title>Analysis of the nucleotide sequence of a 43 kbp segment of the genome of variola virus India-1967 strain.</title>
        <authorList>
            <person name="Shchelkunov S.N."/>
            <person name="Blinov V.M."/>
            <person name="Resenchuk S.M."/>
            <person name="Totmenin A.V."/>
            <person name="Sandakhchiev L.S."/>
        </authorList>
    </citation>
    <scope>NUCLEOTIDE SEQUENCE [GENOMIC DNA]</scope>
</reference>
<reference key="2">
    <citation type="journal article" date="1993" name="Virus Res.">
        <title>Nucleotide sequence analysis of variola virus HindIII M, L, I genome fragments.</title>
        <authorList>
            <person name="Shchelkunov S.N."/>
            <person name="Blinov V.M."/>
            <person name="Totmenin A.V."/>
            <person name="Marennikova S.S."/>
            <person name="Kolykhalov A.A."/>
            <person name="Frolov I.V."/>
            <person name="Chizhikov V.E."/>
            <person name="Gytorov V.V."/>
            <person name="Gashikov P.V."/>
            <person name="Belanov E.F."/>
            <person name="Belavin P.A."/>
            <person name="Resenchuk S.M."/>
            <person name="Andzhaparidze O.G."/>
            <person name="Sandakhchiev L.S."/>
        </authorList>
    </citation>
    <scope>NUCLEOTIDE SEQUENCE [GENOMIC DNA]</scope>
</reference>
<reference key="3">
    <citation type="journal article" date="1993" name="FEBS Lett.">
        <title>Genes of variola and vaccinia viruses necessary to overcome the host protective mechanisms.</title>
        <authorList>
            <person name="Shchelkunov S.N."/>
            <person name="Blinov V.M."/>
            <person name="Sandakhchiev L.S."/>
        </authorList>
    </citation>
    <scope>NUCLEOTIDE SEQUENCE [LARGE SCALE GENOMIC DNA]</scope>
</reference>
<evidence type="ECO:0000250" key="1">
    <source>
        <dbReference type="UniProtKB" id="P68462"/>
    </source>
</evidence>
<evidence type="ECO:0000305" key="2"/>
<organism>
    <name type="scientific">Variola virus (isolate Human/India/Ind3/1967)</name>
    <name type="common">VARV</name>
    <name type="synonym">Smallpox virus</name>
    <dbReference type="NCBI Taxonomy" id="587200"/>
    <lineage>
        <taxon>Viruses</taxon>
        <taxon>Varidnaviria</taxon>
        <taxon>Bamfordvirae</taxon>
        <taxon>Nucleocytoviricota</taxon>
        <taxon>Pokkesviricetes</taxon>
        <taxon>Chitovirales</taxon>
        <taxon>Poxviridae</taxon>
        <taxon>Chordopoxvirinae</taxon>
        <taxon>Orthopoxvirus</taxon>
        <taxon>Variola virus</taxon>
    </lineage>
</organism>
<sequence length="382" mass="43500">MNNFVKQVASKSLKPTKKLSPSDEVISLNECIISFNLDNFYYCNDGLFTKPINTPEDVLKSLLIMESFAYEKMIIKGLIKILISRAYINDIYFTPFGWLTGIDDDPETHVVIKIIFNSSLISIKSQVIEYLKPYNVNNLSVLTTEKELSINTFNVPDSIPMSIISFFPFDTDFILVILFFGVYNDSYCGISYISPKERLPYIIEILKPLMSEINMLSDEIGRTSSIRIFNSTSVKKFPTNTLTSICEIVYSFDESSFPTPKTFTPLNASPYIPKKIVSLLDLPSNVEIKAISRGGVDFITHINNKRLNTILVIAKDNFLKNSTFSGTFIKENIIWKGIYTYRIIKSSFPVPTIKSVTNKKKICKKHCFVNSQYTTRTLSHIL</sequence>
<dbReference type="EMBL" id="X67119">
    <property type="protein sequence ID" value="CAA47560.1"/>
    <property type="molecule type" value="Genomic_DNA"/>
</dbReference>
<dbReference type="EMBL" id="X69198">
    <property type="protein sequence ID" value="CAA49001.1"/>
    <property type="molecule type" value="Genomic_DNA"/>
</dbReference>
<dbReference type="PIR" id="S33075">
    <property type="entry name" value="S33075"/>
</dbReference>
<dbReference type="KEGG" id="vg:1486461"/>
<dbReference type="Proteomes" id="UP000002060">
    <property type="component" value="Segment"/>
</dbReference>
<dbReference type="GO" id="GO:0044423">
    <property type="term" value="C:virion component"/>
    <property type="evidence" value="ECO:0007669"/>
    <property type="project" value="UniProtKB-KW"/>
</dbReference>
<dbReference type="GO" id="GO:0003677">
    <property type="term" value="F:DNA binding"/>
    <property type="evidence" value="ECO:0007669"/>
    <property type="project" value="UniProtKB-KW"/>
</dbReference>
<dbReference type="GO" id="GO:0016032">
    <property type="term" value="P:viral process"/>
    <property type="evidence" value="ECO:0007669"/>
    <property type="project" value="InterPro"/>
</dbReference>
<dbReference type="InterPro" id="IPR007674">
    <property type="entry name" value="Poxvirus_F5/I6_dom"/>
</dbReference>
<dbReference type="InterPro" id="IPR022219">
    <property type="entry name" value="Poxvirus_I6_C"/>
</dbReference>
<dbReference type="Pfam" id="PF04595">
    <property type="entry name" value="Pox_I6"/>
    <property type="match status" value="1"/>
</dbReference>
<dbReference type="Pfam" id="PF12562">
    <property type="entry name" value="Pox_I6_C"/>
    <property type="match status" value="1"/>
</dbReference>
<gene>
    <name type="primary">OPG082</name>
    <name type="ORF">I6L</name>
</gene>
<accession>P0DOL9</accession>
<accession>P33002</accession>
<proteinExistence type="inferred from homology"/>
<organismHost>
    <name type="scientific">Homo sapiens</name>
    <name type="common">Human</name>
    <dbReference type="NCBI Taxonomy" id="9606"/>
</organismHost>
<name>PG082_VAR67</name>
<feature type="chain" id="PRO_0000099580" description="Telomere-binding protein OPG082">
    <location>
        <begin position="1"/>
        <end position="382"/>
    </location>
</feature>
<protein>
    <recommendedName>
        <fullName>Telomere-binding protein OPG082</fullName>
    </recommendedName>
    <alternativeName>
        <fullName>Telomere-binding protein I6</fullName>
    </alternativeName>
</protein>
<keyword id="KW-0238">DNA-binding</keyword>
<keyword id="KW-1185">Reference proteome</keyword>
<keyword id="KW-0946">Virion</keyword>
<comment type="function">
    <text evidence="1">Binds to the hairpin form of the viral telomeric sequence. Might direct genome encapsidation into the virus particle.</text>
</comment>
<comment type="subcellular location">
    <subcellularLocation>
        <location evidence="1">Virion</location>
    </subcellularLocation>
    <text evidence="1">Present in the virus core.</text>
</comment>
<comment type="induction">
    <text evidence="1">Expressed in the intermediate phase of the viral replicative cycle.</text>
</comment>
<comment type="similarity">
    <text evidence="2">Belongs to the orthopoxvirus OPG082 family.</text>
</comment>